<feature type="chain" id="PRO_0000063274" description="Chaperonin GroEL">
    <location>
        <begin position="1"/>
        <end position="544"/>
    </location>
</feature>
<feature type="binding site" evidence="1">
    <location>
        <begin position="29"/>
        <end position="32"/>
    </location>
    <ligand>
        <name>ATP</name>
        <dbReference type="ChEBI" id="CHEBI:30616"/>
    </ligand>
</feature>
<feature type="binding site" evidence="1">
    <location>
        <begin position="86"/>
        <end position="90"/>
    </location>
    <ligand>
        <name>ATP</name>
        <dbReference type="ChEBI" id="CHEBI:30616"/>
    </ligand>
</feature>
<feature type="binding site" evidence="1">
    <location>
        <position position="413"/>
    </location>
    <ligand>
        <name>ATP</name>
        <dbReference type="ChEBI" id="CHEBI:30616"/>
    </ligand>
</feature>
<feature type="binding site" evidence="1">
    <location>
        <begin position="476"/>
        <end position="478"/>
    </location>
    <ligand>
        <name>ATP</name>
        <dbReference type="ChEBI" id="CHEBI:30616"/>
    </ligand>
</feature>
<feature type="binding site" evidence="1">
    <location>
        <position position="492"/>
    </location>
    <ligand>
        <name>ATP</name>
        <dbReference type="ChEBI" id="CHEBI:30616"/>
    </ligand>
</feature>
<protein>
    <recommendedName>
        <fullName evidence="1">Chaperonin GroEL</fullName>
        <ecNumber evidence="1">5.6.1.7</ecNumber>
    </recommendedName>
    <alternativeName>
        <fullName evidence="1">60 kDa chaperonin</fullName>
    </alternativeName>
    <alternativeName>
        <fullName evidence="1">Chaperonin-60</fullName>
        <shortName evidence="1">Cpn60</shortName>
    </alternativeName>
</protein>
<dbReference type="EC" id="5.6.1.7" evidence="1"/>
<dbReference type="EMBL" id="AE017355">
    <property type="protein sequence ID" value="AAT61306.1"/>
    <property type="molecule type" value="Genomic_DNA"/>
</dbReference>
<dbReference type="RefSeq" id="WP_001029999.1">
    <property type="nucleotide sequence ID" value="NC_005957.1"/>
</dbReference>
<dbReference type="RefSeq" id="YP_034593.1">
    <property type="nucleotide sequence ID" value="NC_005957.1"/>
</dbReference>
<dbReference type="SMR" id="Q6HPC7"/>
<dbReference type="GeneID" id="69534143"/>
<dbReference type="KEGG" id="btk:BT9727_0239"/>
<dbReference type="PATRIC" id="fig|281309.8.peg.255"/>
<dbReference type="HOGENOM" id="CLU_016503_3_0_9"/>
<dbReference type="Proteomes" id="UP000001301">
    <property type="component" value="Chromosome"/>
</dbReference>
<dbReference type="GO" id="GO:0005737">
    <property type="term" value="C:cytoplasm"/>
    <property type="evidence" value="ECO:0007669"/>
    <property type="project" value="UniProtKB-SubCell"/>
</dbReference>
<dbReference type="GO" id="GO:0005524">
    <property type="term" value="F:ATP binding"/>
    <property type="evidence" value="ECO:0007669"/>
    <property type="project" value="UniProtKB-UniRule"/>
</dbReference>
<dbReference type="GO" id="GO:0140662">
    <property type="term" value="F:ATP-dependent protein folding chaperone"/>
    <property type="evidence" value="ECO:0007669"/>
    <property type="project" value="InterPro"/>
</dbReference>
<dbReference type="GO" id="GO:0016853">
    <property type="term" value="F:isomerase activity"/>
    <property type="evidence" value="ECO:0007669"/>
    <property type="project" value="UniProtKB-KW"/>
</dbReference>
<dbReference type="GO" id="GO:0051082">
    <property type="term" value="F:unfolded protein binding"/>
    <property type="evidence" value="ECO:0007669"/>
    <property type="project" value="UniProtKB-UniRule"/>
</dbReference>
<dbReference type="GO" id="GO:0042026">
    <property type="term" value="P:protein refolding"/>
    <property type="evidence" value="ECO:0007669"/>
    <property type="project" value="UniProtKB-UniRule"/>
</dbReference>
<dbReference type="CDD" id="cd03344">
    <property type="entry name" value="GroEL"/>
    <property type="match status" value="1"/>
</dbReference>
<dbReference type="FunFam" id="1.10.560.10:FF:000001">
    <property type="entry name" value="60 kDa chaperonin"/>
    <property type="match status" value="1"/>
</dbReference>
<dbReference type="FunFam" id="3.50.7.10:FF:000001">
    <property type="entry name" value="60 kDa chaperonin"/>
    <property type="match status" value="1"/>
</dbReference>
<dbReference type="Gene3D" id="3.50.7.10">
    <property type="entry name" value="GroEL"/>
    <property type="match status" value="1"/>
</dbReference>
<dbReference type="Gene3D" id="1.10.560.10">
    <property type="entry name" value="GroEL-like equatorial domain"/>
    <property type="match status" value="1"/>
</dbReference>
<dbReference type="Gene3D" id="3.30.260.10">
    <property type="entry name" value="TCP-1-like chaperonin intermediate domain"/>
    <property type="match status" value="1"/>
</dbReference>
<dbReference type="HAMAP" id="MF_00600">
    <property type="entry name" value="CH60"/>
    <property type="match status" value="1"/>
</dbReference>
<dbReference type="InterPro" id="IPR018370">
    <property type="entry name" value="Chaperonin_Cpn60_CS"/>
</dbReference>
<dbReference type="InterPro" id="IPR001844">
    <property type="entry name" value="Cpn60/GroEL"/>
</dbReference>
<dbReference type="InterPro" id="IPR002423">
    <property type="entry name" value="Cpn60/GroEL/TCP-1"/>
</dbReference>
<dbReference type="InterPro" id="IPR027409">
    <property type="entry name" value="GroEL-like_apical_dom_sf"/>
</dbReference>
<dbReference type="InterPro" id="IPR027413">
    <property type="entry name" value="GROEL-like_equatorial_sf"/>
</dbReference>
<dbReference type="InterPro" id="IPR027410">
    <property type="entry name" value="TCP-1-like_intermed_sf"/>
</dbReference>
<dbReference type="NCBIfam" id="TIGR02348">
    <property type="entry name" value="GroEL"/>
    <property type="match status" value="1"/>
</dbReference>
<dbReference type="NCBIfam" id="NF000592">
    <property type="entry name" value="PRK00013.1"/>
    <property type="match status" value="1"/>
</dbReference>
<dbReference type="NCBIfam" id="NF009487">
    <property type="entry name" value="PRK12849.1"/>
    <property type="match status" value="1"/>
</dbReference>
<dbReference type="NCBIfam" id="NF009488">
    <property type="entry name" value="PRK12850.1"/>
    <property type="match status" value="1"/>
</dbReference>
<dbReference type="NCBIfam" id="NF009489">
    <property type="entry name" value="PRK12851.1"/>
    <property type="match status" value="1"/>
</dbReference>
<dbReference type="PANTHER" id="PTHR45633">
    <property type="entry name" value="60 KDA HEAT SHOCK PROTEIN, MITOCHONDRIAL"/>
    <property type="match status" value="1"/>
</dbReference>
<dbReference type="Pfam" id="PF00118">
    <property type="entry name" value="Cpn60_TCP1"/>
    <property type="match status" value="1"/>
</dbReference>
<dbReference type="PRINTS" id="PR00298">
    <property type="entry name" value="CHAPERONIN60"/>
</dbReference>
<dbReference type="SUPFAM" id="SSF52029">
    <property type="entry name" value="GroEL apical domain-like"/>
    <property type="match status" value="1"/>
</dbReference>
<dbReference type="SUPFAM" id="SSF48592">
    <property type="entry name" value="GroEL equatorial domain-like"/>
    <property type="match status" value="1"/>
</dbReference>
<dbReference type="SUPFAM" id="SSF54849">
    <property type="entry name" value="GroEL-intermediate domain like"/>
    <property type="match status" value="1"/>
</dbReference>
<dbReference type="PROSITE" id="PS00296">
    <property type="entry name" value="CHAPERONINS_CPN60"/>
    <property type="match status" value="1"/>
</dbReference>
<organism>
    <name type="scientific">Bacillus thuringiensis subsp. konkukian (strain 97-27)</name>
    <dbReference type="NCBI Taxonomy" id="281309"/>
    <lineage>
        <taxon>Bacteria</taxon>
        <taxon>Bacillati</taxon>
        <taxon>Bacillota</taxon>
        <taxon>Bacilli</taxon>
        <taxon>Bacillales</taxon>
        <taxon>Bacillaceae</taxon>
        <taxon>Bacillus</taxon>
        <taxon>Bacillus cereus group</taxon>
    </lineage>
</organism>
<proteinExistence type="inferred from homology"/>
<evidence type="ECO:0000255" key="1">
    <source>
        <dbReference type="HAMAP-Rule" id="MF_00600"/>
    </source>
</evidence>
<gene>
    <name evidence="1" type="primary">groEL</name>
    <name evidence="1" type="synonym">groL</name>
    <name type="ordered locus">BT9727_0239</name>
</gene>
<name>CH60_BACHK</name>
<sequence length="544" mass="57404">MAKDIKFSEEARRSMLRGVDTLANAVKVTLGPKGRNVVLEKKFGSPLITNDGVTIAKEIELEDAFENMGAKLVAEVASKTNDVAGDGTTTATVLAQAMIREGLKNVTAGANPMGLRKGIEKAVVAAVEELKTISKPIEGKSSIAQVAAISAADEEVGQLIAEAMERVGNDGVITLEESKGFTTELDVVEGMQFDRGYASPYMITDSDKMEAVLDNPYILITDKKISNIQEILPVLEQVVQQGKPLLIIAEDVEGEALATLVVNKLRGTFNVVAVKAPGFGDRRKAMLEDIAILTGGEVITEELGRDLKSATVESLGRAGKVVVTKENTTVVEGVGSTEQIEARIGQIRAQLEETTSEFDREKLQERLAKLAGGVAVIKVGAATETELKERKLRIEDALNSTRAAVEEGIVAGGGTSLMNVYTKVASIVAEGDEATGINIVLRALEEPVRQIAINAGLEGSVVVERLKGEKVGVGFNAATGEWVNMLETGIVDPAKVTRSALQNAASVAAMFLTTEAVVADKPEPNAPAMPDMGGMGMGGMGGMM</sequence>
<reference key="1">
    <citation type="journal article" date="2006" name="J. Bacteriol.">
        <title>Pathogenomic sequence analysis of Bacillus cereus and Bacillus thuringiensis isolates closely related to Bacillus anthracis.</title>
        <authorList>
            <person name="Han C.S."/>
            <person name="Xie G."/>
            <person name="Challacombe J.F."/>
            <person name="Altherr M.R."/>
            <person name="Bhotika S.S."/>
            <person name="Bruce D."/>
            <person name="Campbell C.S."/>
            <person name="Campbell M.L."/>
            <person name="Chen J."/>
            <person name="Chertkov O."/>
            <person name="Cleland C."/>
            <person name="Dimitrijevic M."/>
            <person name="Doggett N.A."/>
            <person name="Fawcett J.J."/>
            <person name="Glavina T."/>
            <person name="Goodwin L.A."/>
            <person name="Hill K.K."/>
            <person name="Hitchcock P."/>
            <person name="Jackson P.J."/>
            <person name="Keim P."/>
            <person name="Kewalramani A.R."/>
            <person name="Longmire J."/>
            <person name="Lucas S."/>
            <person name="Malfatti S."/>
            <person name="McMurry K."/>
            <person name="Meincke L.J."/>
            <person name="Misra M."/>
            <person name="Moseman B.L."/>
            <person name="Mundt M."/>
            <person name="Munk A.C."/>
            <person name="Okinaka R.T."/>
            <person name="Parson-Quintana B."/>
            <person name="Reilly L.P."/>
            <person name="Richardson P."/>
            <person name="Robinson D.L."/>
            <person name="Rubin E."/>
            <person name="Saunders E."/>
            <person name="Tapia R."/>
            <person name="Tesmer J.G."/>
            <person name="Thayer N."/>
            <person name="Thompson L.S."/>
            <person name="Tice H."/>
            <person name="Ticknor L.O."/>
            <person name="Wills P.L."/>
            <person name="Brettin T.S."/>
            <person name="Gilna P."/>
        </authorList>
    </citation>
    <scope>NUCLEOTIDE SEQUENCE [LARGE SCALE GENOMIC DNA]</scope>
    <source>
        <strain>97-27</strain>
    </source>
</reference>
<comment type="function">
    <text evidence="1">Together with its co-chaperonin GroES, plays an essential role in assisting protein folding. The GroEL-GroES system forms a nano-cage that allows encapsulation of the non-native substrate proteins and provides a physical environment optimized to promote and accelerate protein folding.</text>
</comment>
<comment type="catalytic activity">
    <reaction evidence="1">
        <text>ATP + H2O + a folded polypeptide = ADP + phosphate + an unfolded polypeptide.</text>
        <dbReference type="EC" id="5.6.1.7"/>
    </reaction>
</comment>
<comment type="subunit">
    <text evidence="1">Forms a cylinder of 14 subunits composed of two heptameric rings stacked back-to-back. Interacts with the co-chaperonin GroES.</text>
</comment>
<comment type="subcellular location">
    <subcellularLocation>
        <location evidence="1">Cytoplasm</location>
    </subcellularLocation>
</comment>
<comment type="similarity">
    <text evidence="1">Belongs to the chaperonin (HSP60) family.</text>
</comment>
<accession>Q6HPC7</accession>
<keyword id="KW-0067">ATP-binding</keyword>
<keyword id="KW-0143">Chaperone</keyword>
<keyword id="KW-0963">Cytoplasm</keyword>
<keyword id="KW-0413">Isomerase</keyword>
<keyword id="KW-0547">Nucleotide-binding</keyword>